<keyword id="KW-0066">ATP synthesis</keyword>
<keyword id="KW-1003">Cell membrane</keyword>
<keyword id="KW-0139">CF(1)</keyword>
<keyword id="KW-0375">Hydrogen ion transport</keyword>
<keyword id="KW-0406">Ion transport</keyword>
<keyword id="KW-0472">Membrane</keyword>
<keyword id="KW-0813">Transport</keyword>
<gene>
    <name evidence="1" type="primary">atpG</name>
    <name type="ordered locus">SA1906</name>
</gene>
<protein>
    <recommendedName>
        <fullName evidence="1">ATP synthase gamma chain</fullName>
    </recommendedName>
    <alternativeName>
        <fullName evidence="1">ATP synthase F1 sector gamma subunit</fullName>
    </alternativeName>
    <alternativeName>
        <fullName evidence="1">F-ATPase gamma subunit</fullName>
    </alternativeName>
</protein>
<proteinExistence type="evidence at protein level"/>
<accession>Q7A4E8</accession>
<feature type="chain" id="PRO_0000073378" description="ATP synthase gamma chain">
    <location>
        <begin position="1"/>
        <end position="288"/>
    </location>
</feature>
<organism>
    <name type="scientific">Staphylococcus aureus (strain N315)</name>
    <dbReference type="NCBI Taxonomy" id="158879"/>
    <lineage>
        <taxon>Bacteria</taxon>
        <taxon>Bacillati</taxon>
        <taxon>Bacillota</taxon>
        <taxon>Bacilli</taxon>
        <taxon>Bacillales</taxon>
        <taxon>Staphylococcaceae</taxon>
        <taxon>Staphylococcus</taxon>
    </lineage>
</organism>
<reference key="1">
    <citation type="journal article" date="2001" name="Lancet">
        <title>Whole genome sequencing of meticillin-resistant Staphylococcus aureus.</title>
        <authorList>
            <person name="Kuroda M."/>
            <person name="Ohta T."/>
            <person name="Uchiyama I."/>
            <person name="Baba T."/>
            <person name="Yuzawa H."/>
            <person name="Kobayashi I."/>
            <person name="Cui L."/>
            <person name="Oguchi A."/>
            <person name="Aoki K."/>
            <person name="Nagai Y."/>
            <person name="Lian J.-Q."/>
            <person name="Ito T."/>
            <person name="Kanamori M."/>
            <person name="Matsumaru H."/>
            <person name="Maruyama A."/>
            <person name="Murakami H."/>
            <person name="Hosoyama A."/>
            <person name="Mizutani-Ui Y."/>
            <person name="Takahashi N.K."/>
            <person name="Sawano T."/>
            <person name="Inoue R."/>
            <person name="Kaito C."/>
            <person name="Sekimizu K."/>
            <person name="Hirakawa H."/>
            <person name="Kuhara S."/>
            <person name="Goto S."/>
            <person name="Yabuzaki J."/>
            <person name="Kanehisa M."/>
            <person name="Yamashita A."/>
            <person name="Oshima K."/>
            <person name="Furuya K."/>
            <person name="Yoshino C."/>
            <person name="Shiba T."/>
            <person name="Hattori M."/>
            <person name="Ogasawara N."/>
            <person name="Hayashi H."/>
            <person name="Hiramatsu K."/>
        </authorList>
    </citation>
    <scope>NUCLEOTIDE SEQUENCE [LARGE SCALE GENOMIC DNA]</scope>
    <source>
        <strain>N315</strain>
    </source>
</reference>
<reference key="2">
    <citation type="submission" date="2007-10" db="UniProtKB">
        <title>Shotgun proteomic analysis of total and membrane protein extracts of S. aureus strain N315.</title>
        <authorList>
            <person name="Vaezzadeh A.R."/>
            <person name="Deshusses J."/>
            <person name="Lescuyer P."/>
            <person name="Hochstrasser D.F."/>
        </authorList>
    </citation>
    <scope>IDENTIFICATION BY MASS SPECTROMETRY [LARGE SCALE ANALYSIS]</scope>
    <source>
        <strain>N315</strain>
    </source>
</reference>
<sequence>MASLKEIDTRIKSTKKMKQITKAMNMVSSSKLRRAEKNTKQFTPYMDKMQDAITAVAGASSNTNHPMLRPRKITRSGYLVITSDKGLAGAYSANVLKKLITDIEAKHQDSSEYSIVVLGQQGVDFLKNRGYDIEYSQVDVPDQPSFKSVQALANHAIDLYSEEEIDELNIYYSHYVSVLENKPTSRQVLPLSQEDSSKGHGHLSSYEFEPDKESILSVILPQYVESLIYGTILDAKASEHATRMTAMKNATDNATELIDDLSLEYNRARQAEITQQITEIVGGSAALE</sequence>
<dbReference type="EMBL" id="BA000018">
    <property type="protein sequence ID" value="BAB43190.1"/>
    <property type="molecule type" value="Genomic_DNA"/>
</dbReference>
<dbReference type="PIR" id="E90003">
    <property type="entry name" value="E90003"/>
</dbReference>
<dbReference type="RefSeq" id="WP_000157603.1">
    <property type="nucleotide sequence ID" value="NC_002745.2"/>
</dbReference>
<dbReference type="SMR" id="Q7A4E8"/>
<dbReference type="EnsemblBacteria" id="BAB43190">
    <property type="protein sequence ID" value="BAB43190"/>
    <property type="gene ID" value="BAB43190"/>
</dbReference>
<dbReference type="GeneID" id="98346411"/>
<dbReference type="KEGG" id="sau:SA1906"/>
<dbReference type="HOGENOM" id="CLU_050669_0_1_9"/>
<dbReference type="GO" id="GO:0005886">
    <property type="term" value="C:plasma membrane"/>
    <property type="evidence" value="ECO:0007669"/>
    <property type="project" value="UniProtKB-SubCell"/>
</dbReference>
<dbReference type="GO" id="GO:0045259">
    <property type="term" value="C:proton-transporting ATP synthase complex"/>
    <property type="evidence" value="ECO:0007669"/>
    <property type="project" value="UniProtKB-KW"/>
</dbReference>
<dbReference type="GO" id="GO:0005524">
    <property type="term" value="F:ATP binding"/>
    <property type="evidence" value="ECO:0007669"/>
    <property type="project" value="UniProtKB-UniRule"/>
</dbReference>
<dbReference type="GO" id="GO:0046933">
    <property type="term" value="F:proton-transporting ATP synthase activity, rotational mechanism"/>
    <property type="evidence" value="ECO:0007669"/>
    <property type="project" value="UniProtKB-UniRule"/>
</dbReference>
<dbReference type="GO" id="GO:0042777">
    <property type="term" value="P:proton motive force-driven plasma membrane ATP synthesis"/>
    <property type="evidence" value="ECO:0007669"/>
    <property type="project" value="UniProtKB-UniRule"/>
</dbReference>
<dbReference type="CDD" id="cd12151">
    <property type="entry name" value="F1-ATPase_gamma"/>
    <property type="match status" value="1"/>
</dbReference>
<dbReference type="FunFam" id="1.10.287.80:FF:000019">
    <property type="entry name" value="ATP synthase gamma chain"/>
    <property type="match status" value="1"/>
</dbReference>
<dbReference type="FunFam" id="3.40.1380.10:FF:000002">
    <property type="entry name" value="ATP synthase gamma chain"/>
    <property type="match status" value="1"/>
</dbReference>
<dbReference type="Gene3D" id="3.40.1380.10">
    <property type="match status" value="1"/>
</dbReference>
<dbReference type="Gene3D" id="1.10.287.80">
    <property type="entry name" value="ATP synthase, gamma subunit, helix hairpin domain"/>
    <property type="match status" value="1"/>
</dbReference>
<dbReference type="HAMAP" id="MF_00815">
    <property type="entry name" value="ATP_synth_gamma_bact"/>
    <property type="match status" value="1"/>
</dbReference>
<dbReference type="InterPro" id="IPR035968">
    <property type="entry name" value="ATP_synth_F1_ATPase_gsu"/>
</dbReference>
<dbReference type="InterPro" id="IPR000131">
    <property type="entry name" value="ATP_synth_F1_gsu"/>
</dbReference>
<dbReference type="NCBIfam" id="TIGR01146">
    <property type="entry name" value="ATPsyn_F1gamma"/>
    <property type="match status" value="1"/>
</dbReference>
<dbReference type="PANTHER" id="PTHR11693">
    <property type="entry name" value="ATP SYNTHASE GAMMA CHAIN"/>
    <property type="match status" value="1"/>
</dbReference>
<dbReference type="PANTHER" id="PTHR11693:SF22">
    <property type="entry name" value="ATP SYNTHASE SUBUNIT GAMMA, MITOCHONDRIAL"/>
    <property type="match status" value="1"/>
</dbReference>
<dbReference type="Pfam" id="PF00231">
    <property type="entry name" value="ATP-synt"/>
    <property type="match status" value="1"/>
</dbReference>
<dbReference type="PRINTS" id="PR00126">
    <property type="entry name" value="ATPASEGAMMA"/>
</dbReference>
<dbReference type="SUPFAM" id="SSF52943">
    <property type="entry name" value="ATP synthase (F1-ATPase), gamma subunit"/>
    <property type="match status" value="1"/>
</dbReference>
<name>ATPG_STAAN</name>
<comment type="function">
    <text evidence="1">Produces ATP from ADP in the presence of a proton gradient across the membrane. The gamma chain is believed to be important in regulating ATPase activity and the flow of protons through the CF(0) complex.</text>
</comment>
<comment type="subunit">
    <text evidence="1">F-type ATPases have 2 components, CF(1) - the catalytic core - and CF(0) - the membrane proton channel. CF(1) has five subunits: alpha(3), beta(3), gamma(1), delta(1), epsilon(1). CF(0) has three main subunits: a, b and c.</text>
</comment>
<comment type="subcellular location">
    <subcellularLocation>
        <location evidence="1">Cell membrane</location>
        <topology evidence="1">Peripheral membrane protein</topology>
    </subcellularLocation>
</comment>
<comment type="similarity">
    <text evidence="1">Belongs to the ATPase gamma chain family.</text>
</comment>
<evidence type="ECO:0000255" key="1">
    <source>
        <dbReference type="HAMAP-Rule" id="MF_00815"/>
    </source>
</evidence>